<keyword id="KW-0012">Acyltransferase</keyword>
<keyword id="KW-0963">Cytoplasm</keyword>
<keyword id="KW-0408">Iron</keyword>
<keyword id="KW-0479">Metal-binding</keyword>
<keyword id="KW-1185">Reference proteome</keyword>
<keyword id="KW-0808">Transferase</keyword>
<keyword id="KW-0819">tRNA processing</keyword>
<accession>Q602S1</accession>
<reference key="1">
    <citation type="journal article" date="2004" name="PLoS Biol.">
        <title>Genomic insights into methanotrophy: the complete genome sequence of Methylococcus capsulatus (Bath).</title>
        <authorList>
            <person name="Ward N.L."/>
            <person name="Larsen O."/>
            <person name="Sakwa J."/>
            <person name="Bruseth L."/>
            <person name="Khouri H.M."/>
            <person name="Durkin A.S."/>
            <person name="Dimitrov G."/>
            <person name="Jiang L."/>
            <person name="Scanlan D."/>
            <person name="Kang K.H."/>
            <person name="Lewis M.R."/>
            <person name="Nelson K.E."/>
            <person name="Methe B.A."/>
            <person name="Wu M."/>
            <person name="Heidelberg J.F."/>
            <person name="Paulsen I.T."/>
            <person name="Fouts D.E."/>
            <person name="Ravel J."/>
            <person name="Tettelin H."/>
            <person name="Ren Q."/>
            <person name="Read T.D."/>
            <person name="DeBoy R.T."/>
            <person name="Seshadri R."/>
            <person name="Salzberg S.L."/>
            <person name="Jensen H.B."/>
            <person name="Birkeland N.K."/>
            <person name="Nelson W.C."/>
            <person name="Dodson R.J."/>
            <person name="Grindhaug S.H."/>
            <person name="Holt I.E."/>
            <person name="Eidhammer I."/>
            <person name="Jonasen I."/>
            <person name="Vanaken S."/>
            <person name="Utterback T.R."/>
            <person name="Feldblyum T.V."/>
            <person name="Fraser C.M."/>
            <person name="Lillehaug J.R."/>
            <person name="Eisen J.A."/>
        </authorList>
    </citation>
    <scope>NUCLEOTIDE SEQUENCE [LARGE SCALE GENOMIC DNA]</scope>
    <source>
        <strain>ATCC 33009 / NCIMB 11132 / Bath</strain>
    </source>
</reference>
<gene>
    <name evidence="1" type="primary">tsaD</name>
    <name type="synonym">gcp</name>
    <name type="ordered locus">MCA2990</name>
</gene>
<protein>
    <recommendedName>
        <fullName evidence="1">tRNA N6-adenosine threonylcarbamoyltransferase</fullName>
        <ecNumber evidence="1">2.3.1.234</ecNumber>
    </recommendedName>
    <alternativeName>
        <fullName evidence="1">N6-L-threonylcarbamoyladenine synthase</fullName>
        <shortName evidence="1">t(6)A synthase</shortName>
    </alternativeName>
    <alternativeName>
        <fullName evidence="1">t(6)A37 threonylcarbamoyladenosine biosynthesis protein TsaD</fullName>
    </alternativeName>
    <alternativeName>
        <fullName evidence="1">tRNA threonylcarbamoyladenosine biosynthesis protein TsaD</fullName>
    </alternativeName>
</protein>
<dbReference type="EC" id="2.3.1.234" evidence="1"/>
<dbReference type="EMBL" id="AE017282">
    <property type="protein sequence ID" value="AAU90995.1"/>
    <property type="molecule type" value="Genomic_DNA"/>
</dbReference>
<dbReference type="RefSeq" id="WP_010962180.1">
    <property type="nucleotide sequence ID" value="NC_002977.6"/>
</dbReference>
<dbReference type="SMR" id="Q602S1"/>
<dbReference type="STRING" id="243233.MCA2990"/>
<dbReference type="GeneID" id="88225152"/>
<dbReference type="KEGG" id="mca:MCA2990"/>
<dbReference type="eggNOG" id="COG0533">
    <property type="taxonomic scope" value="Bacteria"/>
</dbReference>
<dbReference type="HOGENOM" id="CLU_023208_0_0_6"/>
<dbReference type="Proteomes" id="UP000006821">
    <property type="component" value="Chromosome"/>
</dbReference>
<dbReference type="GO" id="GO:0005737">
    <property type="term" value="C:cytoplasm"/>
    <property type="evidence" value="ECO:0007669"/>
    <property type="project" value="UniProtKB-SubCell"/>
</dbReference>
<dbReference type="GO" id="GO:0005506">
    <property type="term" value="F:iron ion binding"/>
    <property type="evidence" value="ECO:0007669"/>
    <property type="project" value="UniProtKB-UniRule"/>
</dbReference>
<dbReference type="GO" id="GO:0061711">
    <property type="term" value="F:N(6)-L-threonylcarbamoyladenine synthase activity"/>
    <property type="evidence" value="ECO:0007669"/>
    <property type="project" value="UniProtKB-EC"/>
</dbReference>
<dbReference type="GO" id="GO:0002949">
    <property type="term" value="P:tRNA threonylcarbamoyladenosine modification"/>
    <property type="evidence" value="ECO:0007669"/>
    <property type="project" value="UniProtKB-UniRule"/>
</dbReference>
<dbReference type="CDD" id="cd24133">
    <property type="entry name" value="ASKHA_NBD_TsaD_bac"/>
    <property type="match status" value="1"/>
</dbReference>
<dbReference type="FunFam" id="3.30.420.40:FF:000012">
    <property type="entry name" value="tRNA N6-adenosine threonylcarbamoyltransferase"/>
    <property type="match status" value="1"/>
</dbReference>
<dbReference type="FunFam" id="3.30.420.40:FF:000031">
    <property type="entry name" value="tRNA N6-adenosine threonylcarbamoyltransferase"/>
    <property type="match status" value="1"/>
</dbReference>
<dbReference type="Gene3D" id="3.30.420.40">
    <property type="match status" value="2"/>
</dbReference>
<dbReference type="HAMAP" id="MF_01445">
    <property type="entry name" value="TsaD"/>
    <property type="match status" value="1"/>
</dbReference>
<dbReference type="InterPro" id="IPR043129">
    <property type="entry name" value="ATPase_NBD"/>
</dbReference>
<dbReference type="InterPro" id="IPR000905">
    <property type="entry name" value="Gcp-like_dom"/>
</dbReference>
<dbReference type="InterPro" id="IPR017861">
    <property type="entry name" value="KAE1/TsaD"/>
</dbReference>
<dbReference type="InterPro" id="IPR022450">
    <property type="entry name" value="TsaD"/>
</dbReference>
<dbReference type="NCBIfam" id="TIGR00329">
    <property type="entry name" value="gcp_kae1"/>
    <property type="match status" value="1"/>
</dbReference>
<dbReference type="NCBIfam" id="TIGR03723">
    <property type="entry name" value="T6A_TsaD_YgjD"/>
    <property type="match status" value="1"/>
</dbReference>
<dbReference type="PANTHER" id="PTHR11735">
    <property type="entry name" value="TRNA N6-ADENOSINE THREONYLCARBAMOYLTRANSFERASE"/>
    <property type="match status" value="1"/>
</dbReference>
<dbReference type="PANTHER" id="PTHR11735:SF6">
    <property type="entry name" value="TRNA N6-ADENOSINE THREONYLCARBAMOYLTRANSFERASE, MITOCHONDRIAL"/>
    <property type="match status" value="1"/>
</dbReference>
<dbReference type="Pfam" id="PF00814">
    <property type="entry name" value="TsaD"/>
    <property type="match status" value="1"/>
</dbReference>
<dbReference type="PRINTS" id="PR00789">
    <property type="entry name" value="OSIALOPTASE"/>
</dbReference>
<dbReference type="SUPFAM" id="SSF53067">
    <property type="entry name" value="Actin-like ATPase domain"/>
    <property type="match status" value="2"/>
</dbReference>
<comment type="function">
    <text evidence="1">Required for the formation of a threonylcarbamoyl group on adenosine at position 37 (t(6)A37) in tRNAs that read codons beginning with adenine. Is involved in the transfer of the threonylcarbamoyl moiety of threonylcarbamoyl-AMP (TC-AMP) to the N6 group of A37, together with TsaE and TsaB. TsaD likely plays a direct catalytic role in this reaction.</text>
</comment>
<comment type="catalytic activity">
    <reaction evidence="1">
        <text>L-threonylcarbamoyladenylate + adenosine(37) in tRNA = N(6)-L-threonylcarbamoyladenosine(37) in tRNA + AMP + H(+)</text>
        <dbReference type="Rhea" id="RHEA:37059"/>
        <dbReference type="Rhea" id="RHEA-COMP:10162"/>
        <dbReference type="Rhea" id="RHEA-COMP:10163"/>
        <dbReference type="ChEBI" id="CHEBI:15378"/>
        <dbReference type="ChEBI" id="CHEBI:73682"/>
        <dbReference type="ChEBI" id="CHEBI:74411"/>
        <dbReference type="ChEBI" id="CHEBI:74418"/>
        <dbReference type="ChEBI" id="CHEBI:456215"/>
        <dbReference type="EC" id="2.3.1.234"/>
    </reaction>
</comment>
<comment type="cofactor">
    <cofactor evidence="1">
        <name>Fe(2+)</name>
        <dbReference type="ChEBI" id="CHEBI:29033"/>
    </cofactor>
    <text evidence="1">Binds 1 Fe(2+) ion per subunit.</text>
</comment>
<comment type="subcellular location">
    <subcellularLocation>
        <location evidence="1">Cytoplasm</location>
    </subcellularLocation>
</comment>
<comment type="similarity">
    <text evidence="1">Belongs to the KAE1 / TsaD family.</text>
</comment>
<name>TSAD_METCA</name>
<sequence length="337" mass="35901">MLVLGIETSCDETGVALYDSSKGLLAHRLYSQVDEHAMYGGVVPEIASRDHLRKLLPLVREVLAAGGVRRTAIGGIAYTAGPGLIGALLVGAAVARSLAWAWSVPAIAVHHMEGHLLAPLLEPEPPEFPFVALLVSGGHTLLVEVRGIGVYQVLGESLDDAAGEAFDKTAKLLGLGYPGGPALARLAEKGRAERFHFPRPMTDRPGLDFSFSGLKTHALNVLAALPGTPQDKADIACAFQAAIVDTLVLKCRRAMRETGLGRLVVAGGVSANQAVRKGLQAMAESERYRVYFPRPEFCTDNGAMIAFAGCWRLRAGQFEPSAIEARARWAMETLTAV</sequence>
<evidence type="ECO:0000255" key="1">
    <source>
        <dbReference type="HAMAP-Rule" id="MF_01445"/>
    </source>
</evidence>
<feature type="chain" id="PRO_0000303426" description="tRNA N6-adenosine threonylcarbamoyltransferase">
    <location>
        <begin position="1"/>
        <end position="337"/>
    </location>
</feature>
<feature type="binding site" evidence="1">
    <location>
        <position position="111"/>
    </location>
    <ligand>
        <name>Fe cation</name>
        <dbReference type="ChEBI" id="CHEBI:24875"/>
    </ligand>
</feature>
<feature type="binding site" evidence="1">
    <location>
        <position position="115"/>
    </location>
    <ligand>
        <name>Fe cation</name>
        <dbReference type="ChEBI" id="CHEBI:24875"/>
    </ligand>
</feature>
<feature type="binding site" evidence="1">
    <location>
        <begin position="134"/>
        <end position="138"/>
    </location>
    <ligand>
        <name>substrate</name>
    </ligand>
</feature>
<feature type="binding site" evidence="1">
    <location>
        <position position="167"/>
    </location>
    <ligand>
        <name>substrate</name>
    </ligand>
</feature>
<feature type="binding site" evidence="1">
    <location>
        <position position="180"/>
    </location>
    <ligand>
        <name>substrate</name>
    </ligand>
</feature>
<feature type="binding site" evidence="1">
    <location>
        <position position="272"/>
    </location>
    <ligand>
        <name>substrate</name>
    </ligand>
</feature>
<feature type="binding site" evidence="1">
    <location>
        <position position="300"/>
    </location>
    <ligand>
        <name>Fe cation</name>
        <dbReference type="ChEBI" id="CHEBI:24875"/>
    </ligand>
</feature>
<organism>
    <name type="scientific">Methylococcus capsulatus (strain ATCC 33009 / NCIMB 11132 / Bath)</name>
    <dbReference type="NCBI Taxonomy" id="243233"/>
    <lineage>
        <taxon>Bacteria</taxon>
        <taxon>Pseudomonadati</taxon>
        <taxon>Pseudomonadota</taxon>
        <taxon>Gammaproteobacteria</taxon>
        <taxon>Methylococcales</taxon>
        <taxon>Methylococcaceae</taxon>
        <taxon>Methylococcus</taxon>
    </lineage>
</organism>
<proteinExistence type="inferred from homology"/>